<evidence type="ECO:0000255" key="1">
    <source>
        <dbReference type="HAMAP-Rule" id="MF_01270"/>
    </source>
</evidence>
<protein>
    <recommendedName>
        <fullName evidence="1">Anhydro-N-acetylmuramic acid kinase</fullName>
        <ecNumber evidence="1">2.7.1.170</ecNumber>
    </recommendedName>
    <alternativeName>
        <fullName evidence="1">AnhMurNAc kinase</fullName>
    </alternativeName>
</protein>
<dbReference type="EC" id="2.7.1.170" evidence="1"/>
<dbReference type="EMBL" id="AL954747">
    <property type="protein sequence ID" value="CAD85340.1"/>
    <property type="molecule type" value="Genomic_DNA"/>
</dbReference>
<dbReference type="SMR" id="Q82UQ3"/>
<dbReference type="STRING" id="228410.NE1429"/>
<dbReference type="KEGG" id="neu:NE1429"/>
<dbReference type="eggNOG" id="COG2377">
    <property type="taxonomic scope" value="Bacteria"/>
</dbReference>
<dbReference type="HOGENOM" id="CLU_038782_0_0_4"/>
<dbReference type="OrthoDB" id="9763949at2"/>
<dbReference type="PhylomeDB" id="Q82UQ3"/>
<dbReference type="UniPathway" id="UPA00343"/>
<dbReference type="UniPathway" id="UPA00544"/>
<dbReference type="Proteomes" id="UP000001416">
    <property type="component" value="Chromosome"/>
</dbReference>
<dbReference type="GO" id="GO:0005524">
    <property type="term" value="F:ATP binding"/>
    <property type="evidence" value="ECO:0007669"/>
    <property type="project" value="UniProtKB-UniRule"/>
</dbReference>
<dbReference type="GO" id="GO:0016301">
    <property type="term" value="F:kinase activity"/>
    <property type="evidence" value="ECO:0007669"/>
    <property type="project" value="UniProtKB-KW"/>
</dbReference>
<dbReference type="GO" id="GO:0016773">
    <property type="term" value="F:phosphotransferase activity, alcohol group as acceptor"/>
    <property type="evidence" value="ECO:0007669"/>
    <property type="project" value="UniProtKB-UniRule"/>
</dbReference>
<dbReference type="GO" id="GO:0097175">
    <property type="term" value="P:1,6-anhydro-N-acetyl-beta-muramic acid catabolic process"/>
    <property type="evidence" value="ECO:0007669"/>
    <property type="project" value="UniProtKB-UniRule"/>
</dbReference>
<dbReference type="GO" id="GO:0006040">
    <property type="term" value="P:amino sugar metabolic process"/>
    <property type="evidence" value="ECO:0007669"/>
    <property type="project" value="InterPro"/>
</dbReference>
<dbReference type="GO" id="GO:0009254">
    <property type="term" value="P:peptidoglycan turnover"/>
    <property type="evidence" value="ECO:0007669"/>
    <property type="project" value="UniProtKB-UniRule"/>
</dbReference>
<dbReference type="CDD" id="cd24050">
    <property type="entry name" value="ASKHA_NBD_ANMK"/>
    <property type="match status" value="1"/>
</dbReference>
<dbReference type="Gene3D" id="3.30.420.40">
    <property type="match status" value="2"/>
</dbReference>
<dbReference type="HAMAP" id="MF_01270">
    <property type="entry name" value="AnhMurNAc_kinase"/>
    <property type="match status" value="1"/>
</dbReference>
<dbReference type="InterPro" id="IPR005338">
    <property type="entry name" value="Anhydro_N_Ac-Mur_kinase"/>
</dbReference>
<dbReference type="InterPro" id="IPR043129">
    <property type="entry name" value="ATPase_NBD"/>
</dbReference>
<dbReference type="NCBIfam" id="NF007139">
    <property type="entry name" value="PRK09585.1-3"/>
    <property type="match status" value="1"/>
</dbReference>
<dbReference type="PANTHER" id="PTHR30605">
    <property type="entry name" value="ANHYDRO-N-ACETYLMURAMIC ACID KINASE"/>
    <property type="match status" value="1"/>
</dbReference>
<dbReference type="PANTHER" id="PTHR30605:SF0">
    <property type="entry name" value="ANHYDRO-N-ACETYLMURAMIC ACID KINASE"/>
    <property type="match status" value="1"/>
</dbReference>
<dbReference type="Pfam" id="PF03702">
    <property type="entry name" value="AnmK"/>
    <property type="match status" value="1"/>
</dbReference>
<dbReference type="SUPFAM" id="SSF53067">
    <property type="entry name" value="Actin-like ATPase domain"/>
    <property type="match status" value="1"/>
</dbReference>
<proteinExistence type="inferred from homology"/>
<comment type="function">
    <text evidence="1">Catalyzes the specific phosphorylation of 1,6-anhydro-N-acetylmuramic acid (anhMurNAc) with the simultaneous cleavage of the 1,6-anhydro ring, generating MurNAc-6-P. Is required for the utilization of anhMurNAc either imported from the medium or derived from its own cell wall murein, and thus plays a role in cell wall recycling.</text>
</comment>
<comment type="catalytic activity">
    <reaction evidence="1">
        <text>1,6-anhydro-N-acetyl-beta-muramate + ATP + H2O = N-acetyl-D-muramate 6-phosphate + ADP + H(+)</text>
        <dbReference type="Rhea" id="RHEA:24952"/>
        <dbReference type="ChEBI" id="CHEBI:15377"/>
        <dbReference type="ChEBI" id="CHEBI:15378"/>
        <dbReference type="ChEBI" id="CHEBI:30616"/>
        <dbReference type="ChEBI" id="CHEBI:58690"/>
        <dbReference type="ChEBI" id="CHEBI:58722"/>
        <dbReference type="ChEBI" id="CHEBI:456216"/>
        <dbReference type="EC" id="2.7.1.170"/>
    </reaction>
</comment>
<comment type="pathway">
    <text evidence="1">Amino-sugar metabolism; 1,6-anhydro-N-acetylmuramate degradation.</text>
</comment>
<comment type="pathway">
    <text evidence="1">Cell wall biogenesis; peptidoglycan recycling.</text>
</comment>
<comment type="similarity">
    <text evidence="1">Belongs to the anhydro-N-acetylmuramic acid kinase family.</text>
</comment>
<accession>Q82UQ3</accession>
<feature type="chain" id="PRO_0000250018" description="Anhydro-N-acetylmuramic acid kinase">
    <location>
        <begin position="1"/>
        <end position="363"/>
    </location>
</feature>
<feature type="binding site" evidence="1">
    <location>
        <begin position="9"/>
        <end position="16"/>
    </location>
    <ligand>
        <name>ATP</name>
        <dbReference type="ChEBI" id="CHEBI:30616"/>
    </ligand>
</feature>
<name>ANMK_NITEU</name>
<keyword id="KW-0067">ATP-binding</keyword>
<keyword id="KW-0119">Carbohydrate metabolism</keyword>
<keyword id="KW-0418">Kinase</keyword>
<keyword id="KW-0547">Nucleotide-binding</keyword>
<keyword id="KW-1185">Reference proteome</keyword>
<keyword id="KW-0808">Transferase</keyword>
<reference key="1">
    <citation type="journal article" date="2003" name="J. Bacteriol.">
        <title>Complete genome sequence of the ammonia-oxidizing bacterium and obligate chemolithoautotroph Nitrosomonas europaea.</title>
        <authorList>
            <person name="Chain P."/>
            <person name="Lamerdin J.E."/>
            <person name="Larimer F.W."/>
            <person name="Regala W."/>
            <person name="Lao V."/>
            <person name="Land M.L."/>
            <person name="Hauser L."/>
            <person name="Hooper A.B."/>
            <person name="Klotz M.G."/>
            <person name="Norton J."/>
            <person name="Sayavedra-Soto L.A."/>
            <person name="Arciero D.M."/>
            <person name="Hommes N.G."/>
            <person name="Whittaker M.M."/>
            <person name="Arp D.J."/>
        </authorList>
    </citation>
    <scope>NUCLEOTIDE SEQUENCE [LARGE SCALE GENOMIC DNA]</scope>
    <source>
        <strain>ATCC 19718 / CIP 103999 / KCTC 2705 / NBRC 14298</strain>
    </source>
</reference>
<sequence>MYYVGIMSGTSLDGIDAVLVDFSGPSFSLLHTCYIPYDQSLRAALLGLNQAGENELHRAAILSNQLSGWYAQAVGRLLEKSGIDPGEIIAVGCHGQTIRHCPQPENGYSIQLVNGALLAELTGMTVVTDFRSRDIAAGGQGAPLVPAFHHEMFAHRDIHRLIINIGGITNITSLPVSGGVNGFDCGPGNMLMDAWCLKHTGMTYDHNGSWAESGRVINPLLENLLNFPYFSLPPPKSTGREMFSLDWLQPCLRGDEATQDVQSTLLQLTVRTITDSVETYYPAVRELYLCGGGAHNGTLVTRLQQQLPGRRINLTDALGIEADWVEACAFAWLARQSIERAPGNLPAVTGATGSRTLGAIYPA</sequence>
<organism>
    <name type="scientific">Nitrosomonas europaea (strain ATCC 19718 / CIP 103999 / KCTC 2705 / NBRC 14298)</name>
    <dbReference type="NCBI Taxonomy" id="228410"/>
    <lineage>
        <taxon>Bacteria</taxon>
        <taxon>Pseudomonadati</taxon>
        <taxon>Pseudomonadota</taxon>
        <taxon>Betaproteobacteria</taxon>
        <taxon>Nitrosomonadales</taxon>
        <taxon>Nitrosomonadaceae</taxon>
        <taxon>Nitrosomonas</taxon>
    </lineage>
</organism>
<gene>
    <name evidence="1" type="primary">anmK</name>
    <name type="ordered locus">NE1429</name>
</gene>